<gene>
    <name evidence="1" type="primary">pckA</name>
    <name type="ordered locus">BT9727_4501</name>
</gene>
<proteinExistence type="inferred from homology"/>
<keyword id="KW-0067">ATP-binding</keyword>
<keyword id="KW-0963">Cytoplasm</keyword>
<keyword id="KW-0210">Decarboxylase</keyword>
<keyword id="KW-0312">Gluconeogenesis</keyword>
<keyword id="KW-0456">Lyase</keyword>
<keyword id="KW-0464">Manganese</keyword>
<keyword id="KW-0479">Metal-binding</keyword>
<keyword id="KW-0547">Nucleotide-binding</keyword>
<dbReference type="EC" id="4.1.1.49" evidence="1"/>
<dbReference type="EMBL" id="AE017355">
    <property type="protein sequence ID" value="AAT63529.1"/>
    <property type="molecule type" value="Genomic_DNA"/>
</dbReference>
<dbReference type="RefSeq" id="WP_000108804.1">
    <property type="nucleotide sequence ID" value="NC_005957.1"/>
</dbReference>
<dbReference type="RefSeq" id="YP_038813.1">
    <property type="nucleotide sequence ID" value="NC_005957.1"/>
</dbReference>
<dbReference type="SMR" id="Q6HCB3"/>
<dbReference type="GeneID" id="75087934"/>
<dbReference type="KEGG" id="btk:BT9727_4501"/>
<dbReference type="PATRIC" id="fig|281309.8.peg.4794"/>
<dbReference type="HOGENOM" id="CLU_018247_0_1_9"/>
<dbReference type="UniPathway" id="UPA00138"/>
<dbReference type="Proteomes" id="UP000001301">
    <property type="component" value="Chromosome"/>
</dbReference>
<dbReference type="GO" id="GO:0005829">
    <property type="term" value="C:cytosol"/>
    <property type="evidence" value="ECO:0007669"/>
    <property type="project" value="TreeGrafter"/>
</dbReference>
<dbReference type="GO" id="GO:0005524">
    <property type="term" value="F:ATP binding"/>
    <property type="evidence" value="ECO:0007669"/>
    <property type="project" value="UniProtKB-UniRule"/>
</dbReference>
<dbReference type="GO" id="GO:0046872">
    <property type="term" value="F:metal ion binding"/>
    <property type="evidence" value="ECO:0007669"/>
    <property type="project" value="UniProtKB-KW"/>
</dbReference>
<dbReference type="GO" id="GO:0004612">
    <property type="term" value="F:phosphoenolpyruvate carboxykinase (ATP) activity"/>
    <property type="evidence" value="ECO:0007669"/>
    <property type="project" value="UniProtKB-UniRule"/>
</dbReference>
<dbReference type="GO" id="GO:0006094">
    <property type="term" value="P:gluconeogenesis"/>
    <property type="evidence" value="ECO:0007669"/>
    <property type="project" value="UniProtKB-UniRule"/>
</dbReference>
<dbReference type="CDD" id="cd00484">
    <property type="entry name" value="PEPCK_ATP"/>
    <property type="match status" value="1"/>
</dbReference>
<dbReference type="FunFam" id="2.170.8.10:FF:000001">
    <property type="entry name" value="Phosphoenolpyruvate carboxykinase (ATP)"/>
    <property type="match status" value="1"/>
</dbReference>
<dbReference type="FunFam" id="3.40.449.10:FF:000001">
    <property type="entry name" value="Phosphoenolpyruvate carboxykinase (ATP)"/>
    <property type="match status" value="1"/>
</dbReference>
<dbReference type="Gene3D" id="3.90.228.20">
    <property type="match status" value="1"/>
</dbReference>
<dbReference type="Gene3D" id="3.40.449.10">
    <property type="entry name" value="Phosphoenolpyruvate Carboxykinase, domain 1"/>
    <property type="match status" value="1"/>
</dbReference>
<dbReference type="Gene3D" id="2.170.8.10">
    <property type="entry name" value="Phosphoenolpyruvate Carboxykinase, domain 2"/>
    <property type="match status" value="1"/>
</dbReference>
<dbReference type="HAMAP" id="MF_00453">
    <property type="entry name" value="PEPCK_ATP"/>
    <property type="match status" value="1"/>
</dbReference>
<dbReference type="InterPro" id="IPR001272">
    <property type="entry name" value="PEP_carboxykinase_ATP"/>
</dbReference>
<dbReference type="InterPro" id="IPR013035">
    <property type="entry name" value="PEP_carboxykinase_C"/>
</dbReference>
<dbReference type="InterPro" id="IPR008210">
    <property type="entry name" value="PEP_carboxykinase_N"/>
</dbReference>
<dbReference type="InterPro" id="IPR015994">
    <property type="entry name" value="PEPCK_ATP_CS"/>
</dbReference>
<dbReference type="NCBIfam" id="TIGR00224">
    <property type="entry name" value="pckA"/>
    <property type="match status" value="1"/>
</dbReference>
<dbReference type="NCBIfam" id="NF006820">
    <property type="entry name" value="PRK09344.1-2"/>
    <property type="match status" value="1"/>
</dbReference>
<dbReference type="NCBIfam" id="NF006821">
    <property type="entry name" value="PRK09344.1-3"/>
    <property type="match status" value="1"/>
</dbReference>
<dbReference type="PANTHER" id="PTHR30031:SF0">
    <property type="entry name" value="PHOSPHOENOLPYRUVATE CARBOXYKINASE (ATP)"/>
    <property type="match status" value="1"/>
</dbReference>
<dbReference type="PANTHER" id="PTHR30031">
    <property type="entry name" value="PHOSPHOENOLPYRUVATE CARBOXYKINASE ATP"/>
    <property type="match status" value="1"/>
</dbReference>
<dbReference type="Pfam" id="PF01293">
    <property type="entry name" value="PEPCK_ATP"/>
    <property type="match status" value="1"/>
</dbReference>
<dbReference type="PIRSF" id="PIRSF006294">
    <property type="entry name" value="PEP_crbxkin"/>
    <property type="match status" value="1"/>
</dbReference>
<dbReference type="SUPFAM" id="SSF68923">
    <property type="entry name" value="PEP carboxykinase N-terminal domain"/>
    <property type="match status" value="1"/>
</dbReference>
<dbReference type="SUPFAM" id="SSF53795">
    <property type="entry name" value="PEP carboxykinase-like"/>
    <property type="match status" value="1"/>
</dbReference>
<dbReference type="PROSITE" id="PS00532">
    <property type="entry name" value="PEPCK_ATP"/>
    <property type="match status" value="1"/>
</dbReference>
<comment type="function">
    <text evidence="1">Involved in the gluconeogenesis. Catalyzes the conversion of oxaloacetate (OAA) to phosphoenolpyruvate (PEP) through direct phosphoryl transfer between the nucleoside triphosphate and OAA.</text>
</comment>
<comment type="catalytic activity">
    <reaction evidence="1">
        <text>oxaloacetate + ATP = phosphoenolpyruvate + ADP + CO2</text>
        <dbReference type="Rhea" id="RHEA:18617"/>
        <dbReference type="ChEBI" id="CHEBI:16452"/>
        <dbReference type="ChEBI" id="CHEBI:16526"/>
        <dbReference type="ChEBI" id="CHEBI:30616"/>
        <dbReference type="ChEBI" id="CHEBI:58702"/>
        <dbReference type="ChEBI" id="CHEBI:456216"/>
        <dbReference type="EC" id="4.1.1.49"/>
    </reaction>
</comment>
<comment type="cofactor">
    <cofactor evidence="1">
        <name>Mn(2+)</name>
        <dbReference type="ChEBI" id="CHEBI:29035"/>
    </cofactor>
    <text evidence="1">Binds 1 Mn(2+) ion per subunit.</text>
</comment>
<comment type="pathway">
    <text evidence="1">Carbohydrate biosynthesis; gluconeogenesis.</text>
</comment>
<comment type="subcellular location">
    <subcellularLocation>
        <location evidence="1">Cytoplasm</location>
    </subcellularLocation>
</comment>
<comment type="similarity">
    <text evidence="1">Belongs to the phosphoenolpyruvate carboxykinase (ATP) family.</text>
</comment>
<feature type="chain" id="PRO_0000203808" description="Phosphoenolpyruvate carboxykinase (ATP)">
    <location>
        <begin position="1"/>
        <end position="528"/>
    </location>
</feature>
<feature type="binding site" evidence="1">
    <location>
        <position position="56"/>
    </location>
    <ligand>
        <name>substrate</name>
    </ligand>
</feature>
<feature type="binding site" evidence="1">
    <location>
        <position position="192"/>
    </location>
    <ligand>
        <name>substrate</name>
    </ligand>
</feature>
<feature type="binding site" evidence="1">
    <location>
        <position position="198"/>
    </location>
    <ligand>
        <name>ATP</name>
        <dbReference type="ChEBI" id="CHEBI:30616"/>
    </ligand>
</feature>
<feature type="binding site" evidence="1">
    <location>
        <position position="198"/>
    </location>
    <ligand>
        <name>Mn(2+)</name>
        <dbReference type="ChEBI" id="CHEBI:29035"/>
    </ligand>
</feature>
<feature type="binding site" evidence="1">
    <location>
        <position position="198"/>
    </location>
    <ligand>
        <name>substrate</name>
    </ligand>
</feature>
<feature type="binding site" evidence="1">
    <location>
        <position position="217"/>
    </location>
    <ligand>
        <name>ATP</name>
        <dbReference type="ChEBI" id="CHEBI:30616"/>
    </ligand>
</feature>
<feature type="binding site" evidence="1">
    <location>
        <position position="217"/>
    </location>
    <ligand>
        <name>Mn(2+)</name>
        <dbReference type="ChEBI" id="CHEBI:29035"/>
    </ligand>
</feature>
<feature type="binding site" evidence="1">
    <location>
        <begin position="233"/>
        <end position="241"/>
    </location>
    <ligand>
        <name>ATP</name>
        <dbReference type="ChEBI" id="CHEBI:30616"/>
    </ligand>
</feature>
<feature type="binding site" evidence="1">
    <location>
        <position position="254"/>
    </location>
    <ligand>
        <name>Mn(2+)</name>
        <dbReference type="ChEBI" id="CHEBI:29035"/>
    </ligand>
</feature>
<feature type="binding site" evidence="1">
    <location>
        <position position="282"/>
    </location>
    <ligand>
        <name>ATP</name>
        <dbReference type="ChEBI" id="CHEBI:30616"/>
    </ligand>
</feature>
<feature type="binding site" evidence="1">
    <location>
        <position position="319"/>
    </location>
    <ligand>
        <name>ATP</name>
        <dbReference type="ChEBI" id="CHEBI:30616"/>
    </ligand>
</feature>
<feature type="binding site" evidence="1">
    <location>
        <position position="319"/>
    </location>
    <ligand>
        <name>substrate</name>
    </ligand>
</feature>
<feature type="binding site" evidence="1">
    <location>
        <position position="444"/>
    </location>
    <ligand>
        <name>ATP</name>
        <dbReference type="ChEBI" id="CHEBI:30616"/>
    </ligand>
</feature>
<sequence length="528" mass="57925">MSTVNVQIGLHELLNGSNAQIQLSVPQLVEKVLMRNEGKLTSTGAVSASTGKYTGRSPKDKFIVKEASVADKIAWGAVNQPISEEHFNKLYTKVLEYLKEKEELFVFKGFAGADRNYRLPIQVINEYAWHNLFVHQLFIRPTEEELTTHESEFTIVSAPNFKADPAVDGTNSEAFIMVSFEKRIVLIGGTEYAGEMKKSIFSIMNFLLPEQDILSMHCSANVGEEGDVALFFGLSGTGKTTLSADPNRKLIGDDEHGWSDNGVFNIEGGCYAKCVNLSHEKEPQIFDAITFGSVLENVIINDQTRIADYNDTTLTENTRAAYPMHAIDNIVLPSVAGHPNTIIFLTADASGVLPPISKLSKEQAMYHFLSGYTSKLAGTERGVTSPQATFSTCFGSPFLPLDASRYAEMLGEKIEKHDAKVFLVNTGWTGGEYGVGKRMNLGYTRAMIQAALSGELAKTETAKHDIFGLEVPLHVPGVPDEVLMPEQTWADKAAYKAKAIELANEFKANFKKFDSVSEDIINLGGPIA</sequence>
<evidence type="ECO:0000255" key="1">
    <source>
        <dbReference type="HAMAP-Rule" id="MF_00453"/>
    </source>
</evidence>
<reference key="1">
    <citation type="journal article" date="2006" name="J. Bacteriol.">
        <title>Pathogenomic sequence analysis of Bacillus cereus and Bacillus thuringiensis isolates closely related to Bacillus anthracis.</title>
        <authorList>
            <person name="Han C.S."/>
            <person name="Xie G."/>
            <person name="Challacombe J.F."/>
            <person name="Altherr M.R."/>
            <person name="Bhotika S.S."/>
            <person name="Bruce D."/>
            <person name="Campbell C.S."/>
            <person name="Campbell M.L."/>
            <person name="Chen J."/>
            <person name="Chertkov O."/>
            <person name="Cleland C."/>
            <person name="Dimitrijevic M."/>
            <person name="Doggett N.A."/>
            <person name="Fawcett J.J."/>
            <person name="Glavina T."/>
            <person name="Goodwin L.A."/>
            <person name="Hill K.K."/>
            <person name="Hitchcock P."/>
            <person name="Jackson P.J."/>
            <person name="Keim P."/>
            <person name="Kewalramani A.R."/>
            <person name="Longmire J."/>
            <person name="Lucas S."/>
            <person name="Malfatti S."/>
            <person name="McMurry K."/>
            <person name="Meincke L.J."/>
            <person name="Misra M."/>
            <person name="Moseman B.L."/>
            <person name="Mundt M."/>
            <person name="Munk A.C."/>
            <person name="Okinaka R.T."/>
            <person name="Parson-Quintana B."/>
            <person name="Reilly L.P."/>
            <person name="Richardson P."/>
            <person name="Robinson D.L."/>
            <person name="Rubin E."/>
            <person name="Saunders E."/>
            <person name="Tapia R."/>
            <person name="Tesmer J.G."/>
            <person name="Thayer N."/>
            <person name="Thompson L.S."/>
            <person name="Tice H."/>
            <person name="Ticknor L.O."/>
            <person name="Wills P.L."/>
            <person name="Brettin T.S."/>
            <person name="Gilna P."/>
        </authorList>
    </citation>
    <scope>NUCLEOTIDE SEQUENCE [LARGE SCALE GENOMIC DNA]</scope>
    <source>
        <strain>97-27</strain>
    </source>
</reference>
<name>PCKA_BACHK</name>
<protein>
    <recommendedName>
        <fullName evidence="1">Phosphoenolpyruvate carboxykinase (ATP)</fullName>
        <shortName evidence="1">PCK</shortName>
        <shortName evidence="1">PEP carboxykinase</shortName>
        <shortName evidence="1">PEPCK</shortName>
        <ecNumber evidence="1">4.1.1.49</ecNumber>
    </recommendedName>
</protein>
<organism>
    <name type="scientific">Bacillus thuringiensis subsp. konkukian (strain 97-27)</name>
    <dbReference type="NCBI Taxonomy" id="281309"/>
    <lineage>
        <taxon>Bacteria</taxon>
        <taxon>Bacillati</taxon>
        <taxon>Bacillota</taxon>
        <taxon>Bacilli</taxon>
        <taxon>Bacillales</taxon>
        <taxon>Bacillaceae</taxon>
        <taxon>Bacillus</taxon>
        <taxon>Bacillus cereus group</taxon>
    </lineage>
</organism>
<accession>Q6HCB3</accession>